<reference key="1">
    <citation type="journal article" date="2004" name="Genome Res.">
        <title>The status, quality, and expansion of the NIH full-length cDNA project: the Mammalian Gene Collection (MGC).</title>
        <authorList>
            <consortium name="The MGC Project Team"/>
        </authorList>
    </citation>
    <scope>NUCLEOTIDE SEQUENCE [LARGE SCALE MRNA]</scope>
    <source>
        <tissue>Testis</tissue>
    </source>
</reference>
<reference key="2">
    <citation type="journal article" date="2019" name="J. Cell. Mol. Med.">
        <title>Deficiency of TPPP2, a factor linked to oligoasthenozoospermia, causes subfertility in male mice.</title>
        <authorList>
            <person name="Zhu F."/>
            <person name="Yan P."/>
            <person name="Zhang J."/>
            <person name="Cui Y."/>
            <person name="Zheng M."/>
            <person name="Cheng Y."/>
            <person name="Guo Y."/>
            <person name="Yang X."/>
            <person name="Guo X."/>
            <person name="Zhu H."/>
        </authorList>
    </citation>
    <scope>FUNCTION</scope>
    <scope>SUBCELLULAR LOCATION</scope>
    <scope>DISRUPTION PHENOTYPE</scope>
    <scope>TISSUE SPECIFICITY</scope>
</reference>
<dbReference type="EMBL" id="BC049709">
    <property type="protein sequence ID" value="AAH49709.1"/>
    <property type="molecule type" value="mRNA"/>
</dbReference>
<dbReference type="CCDS" id="CCDS49487.1"/>
<dbReference type="RefSeq" id="NP_001122106.1">
    <property type="nucleotide sequence ID" value="NM_001128634.1"/>
</dbReference>
<dbReference type="RefSeq" id="XP_006518907.1">
    <property type="nucleotide sequence ID" value="XM_006518844.4"/>
</dbReference>
<dbReference type="SMR" id="Q0P5Y3"/>
<dbReference type="FunCoup" id="Q0P5Y3">
    <property type="interactions" value="36"/>
</dbReference>
<dbReference type="STRING" id="10090.ENSMUSP00000008957"/>
<dbReference type="iPTMnet" id="Q0P5Y3"/>
<dbReference type="PhosphoSitePlus" id="Q0P5Y3"/>
<dbReference type="SwissPalm" id="Q0P5Y3"/>
<dbReference type="PaxDb" id="10090-ENSMUSP00000008957"/>
<dbReference type="ProteomicsDB" id="297511"/>
<dbReference type="Antibodypedia" id="70">
    <property type="antibodies" value="52 antibodies from 15 providers"/>
</dbReference>
<dbReference type="Ensembl" id="ENSMUST00000008957.13">
    <property type="protein sequence ID" value="ENSMUSP00000008957.6"/>
    <property type="gene ID" value="ENSMUSG00000008813.14"/>
</dbReference>
<dbReference type="Ensembl" id="ENSMUST00000177625.2">
    <property type="protein sequence ID" value="ENSMUSP00000136454.2"/>
    <property type="gene ID" value="ENSMUSG00000008813.14"/>
</dbReference>
<dbReference type="GeneID" id="219038"/>
<dbReference type="KEGG" id="mmu:219038"/>
<dbReference type="UCSC" id="uc007tnm.1">
    <property type="organism name" value="mouse"/>
</dbReference>
<dbReference type="AGR" id="MGI:2684923"/>
<dbReference type="CTD" id="122664"/>
<dbReference type="MGI" id="MGI:2684923">
    <property type="gene designation" value="Tppp2"/>
</dbReference>
<dbReference type="VEuPathDB" id="HostDB:ENSMUSG00000008813"/>
<dbReference type="eggNOG" id="KOG4070">
    <property type="taxonomic scope" value="Eukaryota"/>
</dbReference>
<dbReference type="GeneTree" id="ENSGT00940000153875"/>
<dbReference type="HOGENOM" id="CLU_091734_0_0_1"/>
<dbReference type="InParanoid" id="Q0P5Y3"/>
<dbReference type="OMA" id="KELGQMR"/>
<dbReference type="OrthoDB" id="548799at2759"/>
<dbReference type="PhylomeDB" id="Q0P5Y3"/>
<dbReference type="TreeFam" id="TF314440"/>
<dbReference type="BioGRID-ORCS" id="219038">
    <property type="hits" value="2 hits in 75 CRISPR screens"/>
</dbReference>
<dbReference type="PRO" id="PR:Q0P5Y3"/>
<dbReference type="Proteomes" id="UP000000589">
    <property type="component" value="Chromosome 14"/>
</dbReference>
<dbReference type="RNAct" id="Q0P5Y3">
    <property type="molecule type" value="protein"/>
</dbReference>
<dbReference type="Bgee" id="ENSMUSG00000008813">
    <property type="expression patterns" value="Expressed in spermatid and 13 other cell types or tissues"/>
</dbReference>
<dbReference type="GO" id="GO:0005829">
    <property type="term" value="C:cytosol"/>
    <property type="evidence" value="ECO:0007669"/>
    <property type="project" value="UniProtKB-SubCell"/>
</dbReference>
<dbReference type="GO" id="GO:0036126">
    <property type="term" value="C:sperm flagellum"/>
    <property type="evidence" value="ECO:0000314"/>
    <property type="project" value="UniProtKB"/>
</dbReference>
<dbReference type="GO" id="GO:0015631">
    <property type="term" value="F:tubulin binding"/>
    <property type="evidence" value="ECO:0007669"/>
    <property type="project" value="Ensembl"/>
</dbReference>
<dbReference type="GO" id="GO:0030154">
    <property type="term" value="P:cell differentiation"/>
    <property type="evidence" value="ECO:0007669"/>
    <property type="project" value="UniProtKB-KW"/>
</dbReference>
<dbReference type="GO" id="GO:0046785">
    <property type="term" value="P:microtubule polymerization"/>
    <property type="evidence" value="ECO:0007669"/>
    <property type="project" value="InterPro"/>
</dbReference>
<dbReference type="GO" id="GO:1901317">
    <property type="term" value="P:regulation of flagellated sperm motility"/>
    <property type="evidence" value="ECO:0000315"/>
    <property type="project" value="UniProtKB"/>
</dbReference>
<dbReference type="GO" id="GO:0007283">
    <property type="term" value="P:spermatogenesis"/>
    <property type="evidence" value="ECO:0007669"/>
    <property type="project" value="UniProtKB-KW"/>
</dbReference>
<dbReference type="FunFam" id="1.10.238.10:FF:000057">
    <property type="entry name" value="Tubulin polymerization-promoting protein family member 3"/>
    <property type="match status" value="1"/>
</dbReference>
<dbReference type="Gene3D" id="1.10.238.10">
    <property type="entry name" value="EF-hand"/>
    <property type="match status" value="1"/>
</dbReference>
<dbReference type="InterPro" id="IPR011992">
    <property type="entry name" value="EF-hand-dom_pair"/>
</dbReference>
<dbReference type="InterPro" id="IPR008907">
    <property type="entry name" value="TPP/p25"/>
</dbReference>
<dbReference type="PANTHER" id="PTHR12932">
    <property type="entry name" value="P25 ALPHA-RELATED"/>
    <property type="match status" value="1"/>
</dbReference>
<dbReference type="PANTHER" id="PTHR12932:SF21">
    <property type="entry name" value="TUBULIN POLYMERIZATION-PROMOTING PROTEIN FAMILY MEMBER 2"/>
    <property type="match status" value="1"/>
</dbReference>
<dbReference type="Pfam" id="PF05517">
    <property type="entry name" value="p25-alpha"/>
    <property type="match status" value="1"/>
</dbReference>
<dbReference type="SUPFAM" id="SSF47473">
    <property type="entry name" value="EF-hand"/>
    <property type="match status" value="1"/>
</dbReference>
<organism>
    <name type="scientific">Mus musculus</name>
    <name type="common">Mouse</name>
    <dbReference type="NCBI Taxonomy" id="10090"/>
    <lineage>
        <taxon>Eukaryota</taxon>
        <taxon>Metazoa</taxon>
        <taxon>Chordata</taxon>
        <taxon>Craniata</taxon>
        <taxon>Vertebrata</taxon>
        <taxon>Euteleostomi</taxon>
        <taxon>Mammalia</taxon>
        <taxon>Eutheria</taxon>
        <taxon>Euarchontoglires</taxon>
        <taxon>Glires</taxon>
        <taxon>Rodentia</taxon>
        <taxon>Myomorpha</taxon>
        <taxon>Muroidea</taxon>
        <taxon>Muridae</taxon>
        <taxon>Murinae</taxon>
        <taxon>Mus</taxon>
        <taxon>Mus</taxon>
    </lineage>
</organism>
<gene>
    <name evidence="4 7" type="primary">Tppp2</name>
    <name evidence="7" type="synonym">Gm77</name>
</gene>
<keyword id="KW-0966">Cell projection</keyword>
<keyword id="KW-0969">Cilium</keyword>
<keyword id="KW-0963">Cytoplasm</keyword>
<keyword id="KW-0221">Differentiation</keyword>
<keyword id="KW-0282">Flagellum</keyword>
<keyword id="KW-1185">Reference proteome</keyword>
<keyword id="KW-0744">Spermatogenesis</keyword>
<evidence type="ECO:0000250" key="1">
    <source>
        <dbReference type="UniProtKB" id="P59282"/>
    </source>
</evidence>
<evidence type="ECO:0000256" key="2">
    <source>
        <dbReference type="SAM" id="MobiDB-lite"/>
    </source>
</evidence>
<evidence type="ECO:0000269" key="3">
    <source>
    </source>
</evidence>
<evidence type="ECO:0000303" key="4">
    <source>
    </source>
</evidence>
<evidence type="ECO:0000305" key="5"/>
<evidence type="ECO:0000305" key="6">
    <source>
    </source>
</evidence>
<evidence type="ECO:0000312" key="7">
    <source>
        <dbReference type="MGI" id="MGI:2684923"/>
    </source>
</evidence>
<accession>Q0P5Y3</accession>
<comment type="function">
    <text evidence="1 6">Probable regulator of microtubule dynamics required for sperm motility (Probable). In contrast to other members of the family, has no microtubule bundling activity (By similarity).</text>
</comment>
<comment type="subcellular location">
    <subcellularLocation>
        <location evidence="1">Cytoplasm</location>
        <location evidence="1">Cytosol</location>
    </subcellularLocation>
    <subcellularLocation>
        <location evidence="3">Cell projection</location>
        <location evidence="3">Cilium</location>
        <location evidence="3">Flagellum</location>
    </subcellularLocation>
    <text evidence="3">Present in the middle piece of sperm tail.</text>
</comment>
<comment type="tissue specificity">
    <text evidence="3">Only expressed in male reproductive organs, including testis (PubMed:30680919). Expressed in elongating spermatids at stages IV-VIII of the seminiferous epithelial cycle in testis and in mature sperm in the epididymis (PubMed:30680919).</text>
</comment>
<comment type="disruption phenotype">
    <text evidence="3">Male subfertility with a significantly decreased sperm count and motility (PubMed:30680919). Sperm shows increased irregular mitochondria lacking lamellar cristae, abnormal expression of electron transfer chain molecules, lower ATP levels, decreased mitochondrial membrane potential and increased apoptotic index (PubMed:30680919).</text>
</comment>
<comment type="similarity">
    <text evidence="5">Belongs to the TPPP family.</text>
</comment>
<protein>
    <recommendedName>
        <fullName evidence="4">Tubulin polymerization-promoting protein family member 2</fullName>
    </recommendedName>
</protein>
<sequence>MASEAERTFHRFAVFGESSSSSKEITNKNFSKLCKDCDIMDGKAVTSTDVDIVFSKVKAKNARTINFQQFQEAMKELGQKRFKGKNPDEALQGVFKLMEGKDPATTGVTKSTTVGGVDRLTDTSKYTGTHKERFDESGKGKGIEGREETTDNSGYVSGYKGAGTYDKKNQ</sequence>
<name>TPPP2_MOUSE</name>
<proteinExistence type="evidence at transcript level"/>
<feature type="chain" id="PRO_0000289004" description="Tubulin polymerization-promoting protein family member 2">
    <location>
        <begin position="1"/>
        <end position="170"/>
    </location>
</feature>
<feature type="region of interest" description="Disordered" evidence="2">
    <location>
        <begin position="105"/>
        <end position="170"/>
    </location>
</feature>
<feature type="compositionally biased region" description="Low complexity" evidence="2">
    <location>
        <begin position="105"/>
        <end position="117"/>
    </location>
</feature>
<feature type="compositionally biased region" description="Basic and acidic residues" evidence="2">
    <location>
        <begin position="129"/>
        <end position="149"/>
    </location>
</feature>